<reference key="1">
    <citation type="journal article" date="1992" name="Nucleic Acids Res.">
        <title>Tobacco cDNA encoding the ribosomal protein S6.</title>
        <authorList>
            <person name="Hansen G."/>
            <person name="Estruch J.J."/>
            <person name="Spena A."/>
        </authorList>
    </citation>
    <scope>NUCLEOTIDE SEQUENCE [MRNA]</scope>
    <source>
        <strain>cv. SR1</strain>
        <tissue>Leaf</tissue>
    </source>
</reference>
<proteinExistence type="evidence at transcript level"/>
<sequence>KGYVFKIMGGCDKQGFPMKQGVLTPGRVRLLLYRGTPCFRGYGRRNGERRRKSVRGCIVSPDLSVLNLVIVKKGENDLPGLTDTEKPRMRGPREPQRSEALYFKEDDVRKYVNTTAEFTTKWKGSKAPKIQRLVTPLTLQRKRARIADKKKRIAKAKSEAAEYQKLLASRLKEQREKRSESLAKKRSRLSAASKPSIAA</sequence>
<dbReference type="EMBL" id="X68050">
    <property type="protein sequence ID" value="CAA48187.1"/>
    <property type="status" value="ALT_INIT"/>
    <property type="molecule type" value="mRNA"/>
</dbReference>
<dbReference type="PIR" id="S26078">
    <property type="entry name" value="S26078"/>
</dbReference>
<dbReference type="SMR" id="P29345"/>
<dbReference type="STRING" id="4097.P29345"/>
<dbReference type="PaxDb" id="4097-P29345"/>
<dbReference type="Proteomes" id="UP000084051">
    <property type="component" value="Unplaced"/>
</dbReference>
<dbReference type="GO" id="GO:1990904">
    <property type="term" value="C:ribonucleoprotein complex"/>
    <property type="evidence" value="ECO:0007669"/>
    <property type="project" value="UniProtKB-KW"/>
</dbReference>
<dbReference type="GO" id="GO:0005840">
    <property type="term" value="C:ribosome"/>
    <property type="evidence" value="ECO:0007669"/>
    <property type="project" value="UniProtKB-KW"/>
</dbReference>
<dbReference type="GO" id="GO:0003735">
    <property type="term" value="F:structural constituent of ribosome"/>
    <property type="evidence" value="ECO:0007669"/>
    <property type="project" value="InterPro"/>
</dbReference>
<dbReference type="GO" id="GO:0006412">
    <property type="term" value="P:translation"/>
    <property type="evidence" value="ECO:0007669"/>
    <property type="project" value="InterPro"/>
</dbReference>
<dbReference type="Gene3D" id="1.20.5.2650">
    <property type="match status" value="1"/>
</dbReference>
<dbReference type="InterPro" id="IPR001377">
    <property type="entry name" value="Ribosomal_eS6"/>
</dbReference>
<dbReference type="InterPro" id="IPR014401">
    <property type="entry name" value="Ribosomal_eS6-like"/>
</dbReference>
<dbReference type="InterPro" id="IPR018282">
    <property type="entry name" value="Ribosomal_eS6_CS"/>
</dbReference>
<dbReference type="PANTHER" id="PTHR11502">
    <property type="entry name" value="40S RIBOSOMAL PROTEIN S6"/>
    <property type="match status" value="1"/>
</dbReference>
<dbReference type="Pfam" id="PF01092">
    <property type="entry name" value="Ribosomal_S6e"/>
    <property type="match status" value="1"/>
</dbReference>
<dbReference type="PIRSF" id="PIRSF002129">
    <property type="entry name" value="Ribosom_S6_euk"/>
    <property type="match status" value="1"/>
</dbReference>
<dbReference type="SMART" id="SM01405">
    <property type="entry name" value="Ribosomal_S6e"/>
    <property type="match status" value="1"/>
</dbReference>
<dbReference type="PROSITE" id="PS00578">
    <property type="entry name" value="RIBOSOMAL_S6E"/>
    <property type="match status" value="1"/>
</dbReference>
<accession>P29345</accession>
<gene>
    <name type="primary">RPS6</name>
</gene>
<keyword id="KW-0597">Phosphoprotein</keyword>
<keyword id="KW-1185">Reference proteome</keyword>
<keyword id="KW-0687">Ribonucleoprotein</keyword>
<keyword id="KW-0689">Ribosomal protein</keyword>
<comment type="function">
    <text evidence="1">Component of the 40S small ribosomal subunit (By similarity). Plays an important role in controlling cell growth and proliferation through the selective translation of particular classes of mRNA (By similarity).</text>
</comment>
<comment type="PTM">
    <text evidence="1">Ribosomal protein S6 is the major substrate of protein kinases in eukaryote ribosomes.</text>
</comment>
<comment type="similarity">
    <text evidence="3">Belongs to the eukaryotic ribosomal protein eS6 family.</text>
</comment>
<comment type="sequence caution" evidence="3">
    <conflict type="erroneous initiation">
        <sequence resource="EMBL-CDS" id="CAA48187"/>
    </conflict>
</comment>
<name>RS6_TOBAC</name>
<organism>
    <name type="scientific">Nicotiana tabacum</name>
    <name type="common">Common tobacco</name>
    <dbReference type="NCBI Taxonomy" id="4097"/>
    <lineage>
        <taxon>Eukaryota</taxon>
        <taxon>Viridiplantae</taxon>
        <taxon>Streptophyta</taxon>
        <taxon>Embryophyta</taxon>
        <taxon>Tracheophyta</taxon>
        <taxon>Spermatophyta</taxon>
        <taxon>Magnoliopsida</taxon>
        <taxon>eudicotyledons</taxon>
        <taxon>Gunneridae</taxon>
        <taxon>Pentapetalae</taxon>
        <taxon>asterids</taxon>
        <taxon>lamiids</taxon>
        <taxon>Solanales</taxon>
        <taxon>Solanaceae</taxon>
        <taxon>Nicotianoideae</taxon>
        <taxon>Nicotianeae</taxon>
        <taxon>Nicotiana</taxon>
    </lineage>
</organism>
<feature type="chain" id="PRO_0000137332" description="Small ribosomal subunit protein eS6">
    <location>
        <begin position="1" status="less than"/>
        <end position="199"/>
    </location>
</feature>
<feature type="region of interest" description="Disordered" evidence="2">
    <location>
        <begin position="172"/>
        <end position="199"/>
    </location>
</feature>
<feature type="compositionally biased region" description="Basic and acidic residues" evidence="2">
    <location>
        <begin position="172"/>
        <end position="183"/>
    </location>
</feature>
<feature type="non-terminal residue">
    <location>
        <position position="1"/>
    </location>
</feature>
<evidence type="ECO:0000250" key="1">
    <source>
        <dbReference type="UniProtKB" id="P62753"/>
    </source>
</evidence>
<evidence type="ECO:0000256" key="2">
    <source>
        <dbReference type="SAM" id="MobiDB-lite"/>
    </source>
</evidence>
<evidence type="ECO:0000305" key="3"/>
<protein>
    <recommendedName>
        <fullName evidence="3">Small ribosomal subunit protein eS6</fullName>
    </recommendedName>
    <alternativeName>
        <fullName>40S ribosomal protein S6</fullName>
    </alternativeName>
</protein>